<feature type="chain" id="PRO_1000086389" description="DNA-directed RNA polymerase subunit beta'">
    <location>
        <begin position="1"/>
        <end position="1393"/>
    </location>
</feature>
<feature type="binding site" evidence="1">
    <location>
        <position position="71"/>
    </location>
    <ligand>
        <name>Zn(2+)</name>
        <dbReference type="ChEBI" id="CHEBI:29105"/>
        <label>1</label>
    </ligand>
</feature>
<feature type="binding site" evidence="1">
    <location>
        <position position="73"/>
    </location>
    <ligand>
        <name>Zn(2+)</name>
        <dbReference type="ChEBI" id="CHEBI:29105"/>
        <label>1</label>
    </ligand>
</feature>
<feature type="binding site" evidence="1">
    <location>
        <position position="86"/>
    </location>
    <ligand>
        <name>Zn(2+)</name>
        <dbReference type="ChEBI" id="CHEBI:29105"/>
        <label>1</label>
    </ligand>
</feature>
<feature type="binding site" evidence="1">
    <location>
        <position position="89"/>
    </location>
    <ligand>
        <name>Zn(2+)</name>
        <dbReference type="ChEBI" id="CHEBI:29105"/>
        <label>1</label>
    </ligand>
</feature>
<feature type="binding site" evidence="1">
    <location>
        <position position="462"/>
    </location>
    <ligand>
        <name>Mg(2+)</name>
        <dbReference type="ChEBI" id="CHEBI:18420"/>
    </ligand>
</feature>
<feature type="binding site" evidence="1">
    <location>
        <position position="464"/>
    </location>
    <ligand>
        <name>Mg(2+)</name>
        <dbReference type="ChEBI" id="CHEBI:18420"/>
    </ligand>
</feature>
<feature type="binding site" evidence="1">
    <location>
        <position position="466"/>
    </location>
    <ligand>
        <name>Mg(2+)</name>
        <dbReference type="ChEBI" id="CHEBI:18420"/>
    </ligand>
</feature>
<feature type="binding site" evidence="1">
    <location>
        <position position="811"/>
    </location>
    <ligand>
        <name>Zn(2+)</name>
        <dbReference type="ChEBI" id="CHEBI:29105"/>
        <label>2</label>
    </ligand>
</feature>
<feature type="binding site" evidence="1">
    <location>
        <position position="885"/>
    </location>
    <ligand>
        <name>Zn(2+)</name>
        <dbReference type="ChEBI" id="CHEBI:29105"/>
        <label>2</label>
    </ligand>
</feature>
<feature type="binding site" evidence="1">
    <location>
        <position position="892"/>
    </location>
    <ligand>
        <name>Zn(2+)</name>
        <dbReference type="ChEBI" id="CHEBI:29105"/>
        <label>2</label>
    </ligand>
</feature>
<feature type="binding site" evidence="1">
    <location>
        <position position="895"/>
    </location>
    <ligand>
        <name>Zn(2+)</name>
        <dbReference type="ChEBI" id="CHEBI:29105"/>
        <label>2</label>
    </ligand>
</feature>
<gene>
    <name evidence="1" type="primary">rpoC</name>
    <name type="ordered locus">AZC_0888</name>
</gene>
<dbReference type="EC" id="2.7.7.6" evidence="1"/>
<dbReference type="EMBL" id="AP009384">
    <property type="protein sequence ID" value="BAF86886.1"/>
    <property type="molecule type" value="Genomic_DNA"/>
</dbReference>
<dbReference type="RefSeq" id="WP_012169419.1">
    <property type="nucleotide sequence ID" value="NC_009937.1"/>
</dbReference>
<dbReference type="SMR" id="A8HTZ1"/>
<dbReference type="STRING" id="438753.AZC_0888"/>
<dbReference type="KEGG" id="azc:AZC_0888"/>
<dbReference type="eggNOG" id="COG0086">
    <property type="taxonomic scope" value="Bacteria"/>
</dbReference>
<dbReference type="HOGENOM" id="CLU_000524_3_1_5"/>
<dbReference type="Proteomes" id="UP000000270">
    <property type="component" value="Chromosome"/>
</dbReference>
<dbReference type="GO" id="GO:0000428">
    <property type="term" value="C:DNA-directed RNA polymerase complex"/>
    <property type="evidence" value="ECO:0007669"/>
    <property type="project" value="UniProtKB-KW"/>
</dbReference>
<dbReference type="GO" id="GO:0003677">
    <property type="term" value="F:DNA binding"/>
    <property type="evidence" value="ECO:0007669"/>
    <property type="project" value="UniProtKB-UniRule"/>
</dbReference>
<dbReference type="GO" id="GO:0003899">
    <property type="term" value="F:DNA-directed RNA polymerase activity"/>
    <property type="evidence" value="ECO:0007669"/>
    <property type="project" value="UniProtKB-UniRule"/>
</dbReference>
<dbReference type="GO" id="GO:0000287">
    <property type="term" value="F:magnesium ion binding"/>
    <property type="evidence" value="ECO:0007669"/>
    <property type="project" value="UniProtKB-UniRule"/>
</dbReference>
<dbReference type="GO" id="GO:0008270">
    <property type="term" value="F:zinc ion binding"/>
    <property type="evidence" value="ECO:0007669"/>
    <property type="project" value="UniProtKB-UniRule"/>
</dbReference>
<dbReference type="GO" id="GO:0006351">
    <property type="term" value="P:DNA-templated transcription"/>
    <property type="evidence" value="ECO:0007669"/>
    <property type="project" value="UniProtKB-UniRule"/>
</dbReference>
<dbReference type="CDD" id="cd02655">
    <property type="entry name" value="RNAP_beta'_C"/>
    <property type="match status" value="1"/>
</dbReference>
<dbReference type="CDD" id="cd01609">
    <property type="entry name" value="RNAP_beta'_N"/>
    <property type="match status" value="1"/>
</dbReference>
<dbReference type="FunFam" id="4.10.860.120:FF:000001">
    <property type="entry name" value="DNA-directed RNA polymerase subunit beta"/>
    <property type="match status" value="1"/>
</dbReference>
<dbReference type="Gene3D" id="1.10.132.30">
    <property type="match status" value="1"/>
</dbReference>
<dbReference type="Gene3D" id="1.10.150.390">
    <property type="match status" value="1"/>
</dbReference>
<dbReference type="Gene3D" id="1.10.1790.20">
    <property type="match status" value="1"/>
</dbReference>
<dbReference type="Gene3D" id="1.10.40.90">
    <property type="match status" value="1"/>
</dbReference>
<dbReference type="Gene3D" id="2.40.40.20">
    <property type="match status" value="1"/>
</dbReference>
<dbReference type="Gene3D" id="2.40.50.100">
    <property type="match status" value="3"/>
</dbReference>
<dbReference type="Gene3D" id="4.10.860.120">
    <property type="entry name" value="RNA polymerase II, clamp domain"/>
    <property type="match status" value="1"/>
</dbReference>
<dbReference type="Gene3D" id="1.10.274.100">
    <property type="entry name" value="RNA polymerase Rpb1, domain 3"/>
    <property type="match status" value="2"/>
</dbReference>
<dbReference type="HAMAP" id="MF_01322">
    <property type="entry name" value="RNApol_bact_RpoC"/>
    <property type="match status" value="1"/>
</dbReference>
<dbReference type="InterPro" id="IPR045867">
    <property type="entry name" value="DNA-dir_RpoC_beta_prime"/>
</dbReference>
<dbReference type="InterPro" id="IPR012754">
    <property type="entry name" value="DNA-dir_RpoC_beta_prime_bact"/>
</dbReference>
<dbReference type="InterPro" id="IPR000722">
    <property type="entry name" value="RNA_pol_asu"/>
</dbReference>
<dbReference type="InterPro" id="IPR006592">
    <property type="entry name" value="RNA_pol_N"/>
</dbReference>
<dbReference type="InterPro" id="IPR007080">
    <property type="entry name" value="RNA_pol_Rpb1_1"/>
</dbReference>
<dbReference type="InterPro" id="IPR007066">
    <property type="entry name" value="RNA_pol_Rpb1_3"/>
</dbReference>
<dbReference type="InterPro" id="IPR042102">
    <property type="entry name" value="RNA_pol_Rpb1_3_sf"/>
</dbReference>
<dbReference type="InterPro" id="IPR007083">
    <property type="entry name" value="RNA_pol_Rpb1_4"/>
</dbReference>
<dbReference type="InterPro" id="IPR007081">
    <property type="entry name" value="RNA_pol_Rpb1_5"/>
</dbReference>
<dbReference type="InterPro" id="IPR044893">
    <property type="entry name" value="RNA_pol_Rpb1_clamp_domain"/>
</dbReference>
<dbReference type="InterPro" id="IPR038120">
    <property type="entry name" value="Rpb1_funnel_sf"/>
</dbReference>
<dbReference type="NCBIfam" id="TIGR02386">
    <property type="entry name" value="rpoC_TIGR"/>
    <property type="match status" value="1"/>
</dbReference>
<dbReference type="PANTHER" id="PTHR19376">
    <property type="entry name" value="DNA-DIRECTED RNA POLYMERASE"/>
    <property type="match status" value="1"/>
</dbReference>
<dbReference type="PANTHER" id="PTHR19376:SF54">
    <property type="entry name" value="DNA-DIRECTED RNA POLYMERASE SUBUNIT BETA"/>
    <property type="match status" value="1"/>
</dbReference>
<dbReference type="Pfam" id="PF04997">
    <property type="entry name" value="RNA_pol_Rpb1_1"/>
    <property type="match status" value="1"/>
</dbReference>
<dbReference type="Pfam" id="PF00623">
    <property type="entry name" value="RNA_pol_Rpb1_2"/>
    <property type="match status" value="1"/>
</dbReference>
<dbReference type="Pfam" id="PF04983">
    <property type="entry name" value="RNA_pol_Rpb1_3"/>
    <property type="match status" value="1"/>
</dbReference>
<dbReference type="Pfam" id="PF05000">
    <property type="entry name" value="RNA_pol_Rpb1_4"/>
    <property type="match status" value="1"/>
</dbReference>
<dbReference type="Pfam" id="PF04998">
    <property type="entry name" value="RNA_pol_Rpb1_5"/>
    <property type="match status" value="1"/>
</dbReference>
<dbReference type="SMART" id="SM00663">
    <property type="entry name" value="RPOLA_N"/>
    <property type="match status" value="1"/>
</dbReference>
<dbReference type="SUPFAM" id="SSF64484">
    <property type="entry name" value="beta and beta-prime subunits of DNA dependent RNA-polymerase"/>
    <property type="match status" value="1"/>
</dbReference>
<reference key="1">
    <citation type="submission" date="2007-04" db="EMBL/GenBank/DDBJ databases">
        <title>Complete genome sequence of the nitrogen-fixing bacterium Azorhizobium caulinodans ORS571.</title>
        <authorList>
            <person name="Lee K.B."/>
            <person name="Backer P.D."/>
            <person name="Aono T."/>
            <person name="Liu C.T."/>
            <person name="Suzuki S."/>
            <person name="Suzuki T."/>
            <person name="Kaneko T."/>
            <person name="Yamada M."/>
            <person name="Tabata S."/>
            <person name="Kupfer D.M."/>
            <person name="Najar F.Z."/>
            <person name="Wiley G.B."/>
            <person name="Roe B."/>
            <person name="Binnewies T."/>
            <person name="Ussery D."/>
            <person name="Vereecke D."/>
            <person name="Gevers D."/>
            <person name="Holsters M."/>
            <person name="Oyaizu H."/>
        </authorList>
    </citation>
    <scope>NUCLEOTIDE SEQUENCE [LARGE SCALE GENOMIC DNA]</scope>
    <source>
        <strain>ATCC 43989 / DSM 5975 / JCM 20966 / LMG 6465 / NBRC 14845 / NCIMB 13405 / ORS 571</strain>
    </source>
</reference>
<name>RPOC_AZOC5</name>
<comment type="function">
    <text evidence="1">DNA-dependent RNA polymerase catalyzes the transcription of DNA into RNA using the four ribonucleoside triphosphates as substrates.</text>
</comment>
<comment type="catalytic activity">
    <reaction evidence="1">
        <text>RNA(n) + a ribonucleoside 5'-triphosphate = RNA(n+1) + diphosphate</text>
        <dbReference type="Rhea" id="RHEA:21248"/>
        <dbReference type="Rhea" id="RHEA-COMP:14527"/>
        <dbReference type="Rhea" id="RHEA-COMP:17342"/>
        <dbReference type="ChEBI" id="CHEBI:33019"/>
        <dbReference type="ChEBI" id="CHEBI:61557"/>
        <dbReference type="ChEBI" id="CHEBI:140395"/>
        <dbReference type="EC" id="2.7.7.6"/>
    </reaction>
</comment>
<comment type="cofactor">
    <cofactor evidence="1">
        <name>Mg(2+)</name>
        <dbReference type="ChEBI" id="CHEBI:18420"/>
    </cofactor>
    <text evidence="1">Binds 1 Mg(2+) ion per subunit.</text>
</comment>
<comment type="cofactor">
    <cofactor evidence="1">
        <name>Zn(2+)</name>
        <dbReference type="ChEBI" id="CHEBI:29105"/>
    </cofactor>
    <text evidence="1">Binds 2 Zn(2+) ions per subunit.</text>
</comment>
<comment type="subunit">
    <text evidence="1">The RNAP catalytic core consists of 2 alpha, 1 beta, 1 beta' and 1 omega subunit. When a sigma factor is associated with the core the holoenzyme is formed, which can initiate transcription.</text>
</comment>
<comment type="similarity">
    <text evidence="1">Belongs to the RNA polymerase beta' chain family.</text>
</comment>
<accession>A8HTZ1</accession>
<proteinExistence type="inferred from homology"/>
<keyword id="KW-0240">DNA-directed RNA polymerase</keyword>
<keyword id="KW-0460">Magnesium</keyword>
<keyword id="KW-0479">Metal-binding</keyword>
<keyword id="KW-0548">Nucleotidyltransferase</keyword>
<keyword id="KW-1185">Reference proteome</keyword>
<keyword id="KW-0804">Transcription</keyword>
<keyword id="KW-0808">Transferase</keyword>
<keyword id="KW-0862">Zinc</keyword>
<evidence type="ECO:0000255" key="1">
    <source>
        <dbReference type="HAMAP-Rule" id="MF_01322"/>
    </source>
</evidence>
<sequence>MNQEVMNLFNPTTPAPTFDQIKISIASPEKISSWSYGEIKKPETINYRTFKPERDGLFCARIFGPIKDYECLCGKYKRMKYKGIICEKCGVEVTLSRVRRERMGHIELAAPVAHIWFLKSLPSRIGLLLDMTLKDLERILYFEYFVVTEPGLTPLKYRQLLSEDDYLRAQDEYGEDSFTAMIGAEAIRELLRSMDLEKLAADIRVEIANSTTELKPKKLAKRLKIVEAFQASGNKPEWMILTHVPVIPPDLRPLVPLDGGRFATSDLNDLYRRVINRNNRLKRLIELRAPDIIIRNEKRMLQEAVDALFDNGRRGRVITGANKRPLKSLADMLKGKQGRFRQNLLGKRVDYSGRSVIVVGPELKLHQCGLPKKMALELFKPFIYARLDAKGHSATVKQAKKLVEKERPEVWDILDEVIREHPVMLNRAPTLHRLGIQAFEPVLIEGKAIQLHPLVCSAFNADFDGDQMAVHVPLSLEAQLEARVLMMSTNNILHPANGAPIIVPSQDIVLGLYYLSLMREKEPGEGMMFADMGEIDHAIAAKAITLHTKIRGRYIGVDADGKRYSKIYETTPGRMKIGELLPKHHKVPFDVVNKLMTKKEISNMIDTVYRHCGQKESVIFCDRLMSLGFYNAFRAGISFGKDDMVVPAKKWQLVEETRTLTKEYEQQYNDGLITQGEKYNKVVDAWGKCTDRIADEMMKEISAVKKDPETGREKQINSIYMMSHSGARGSPAQMKQLAGMRGLMAKPSGEIIESPIISNFKEGLTVMEYFNSTHGARKGLADTALKTANSGYLTRRLVDVAQDSIINERDCGSNNGIHMRAIIDSGQVVASLASRVLGRTAVEDVVEPATGDIIVPKGTMIEEHHIERINKSGIQEIKIRSVLTCETRNGVCGTCYGRDLARGTPVNMGEAVGVIAAQSIGEPGTQLTMRTFHIGGAAQLADSSFVETNFEGTVRVRNRNVARNSEGDLVVMARNLAIVVVDHDGTERAVHRIQYGSRLKVDEGDTVKRGQRIAEWDPYTRPILTEVDGTVGFEDLVEGQSMSEAVDEATGIAKRVVTDSRSVRGADLRPAIVLKGKDGKVSKLPRGGDARYTLPVEAIISVDPGQTIKAGDVVARVPMESAKTRDITGGLPRVAELFEARRPKDAAIIAEISGTVRFGRDYKNKRRLTIEPTEGGDAVEYLIPKGKHIHLQDGDVVEKGDFLVDGNPAPHDILAIKGVEELAAFLVNEIQEVYRLQGVNINDKHIEVIVRNMLQKVELDDAGDTEFLDGEQVDRIELAEANERMKEQGLKPATGHPVLLGITKASLQTRSFFSAASFQETTRVLTEAAVNGKVDPLDGLKENVIVGRLIPAGTGAQMNKLRVTANSRDDLILATRGESEEPSMVEGSADAAE</sequence>
<protein>
    <recommendedName>
        <fullName evidence="1">DNA-directed RNA polymerase subunit beta'</fullName>
        <shortName evidence="1">RNAP subunit beta'</shortName>
        <ecNumber evidence="1">2.7.7.6</ecNumber>
    </recommendedName>
    <alternativeName>
        <fullName evidence="1">RNA polymerase subunit beta'</fullName>
    </alternativeName>
    <alternativeName>
        <fullName evidence="1">Transcriptase subunit beta'</fullName>
    </alternativeName>
</protein>
<organism>
    <name type="scientific">Azorhizobium caulinodans (strain ATCC 43989 / DSM 5975 / JCM 20966 / LMG 6465 / NBRC 14845 / NCIMB 13405 / ORS 571)</name>
    <dbReference type="NCBI Taxonomy" id="438753"/>
    <lineage>
        <taxon>Bacteria</taxon>
        <taxon>Pseudomonadati</taxon>
        <taxon>Pseudomonadota</taxon>
        <taxon>Alphaproteobacteria</taxon>
        <taxon>Hyphomicrobiales</taxon>
        <taxon>Xanthobacteraceae</taxon>
        <taxon>Azorhizobium</taxon>
    </lineage>
</organism>